<feature type="chain" id="PRO_1000166045" description="Large ribosomal subunit protein uL22">
    <location>
        <begin position="1"/>
        <end position="119"/>
    </location>
</feature>
<proteinExistence type="inferred from homology"/>
<sequence>MEAKAIARHVRVTPRKARRMVDLIRGKKATEAITILKFAPQDASTPVLKVLQSAIANARVKADKAGEPFRENDLYIKETYVDEGVTLKRFRARAQGRAARINKRTSHITVVVASKEGDR</sequence>
<comment type="function">
    <text evidence="1">This protein binds specifically to 23S rRNA; its binding is stimulated by other ribosomal proteins, e.g. L4, L17, and L20. It is important during the early stages of 50S assembly. It makes multiple contacts with different domains of the 23S rRNA in the assembled 50S subunit and ribosome (By similarity).</text>
</comment>
<comment type="function">
    <text evidence="1">The globular domain of the protein is located near the polypeptide exit tunnel on the outside of the subunit, while an extended beta-hairpin is found that lines the wall of the exit tunnel in the center of the 70S ribosome.</text>
</comment>
<comment type="subunit">
    <text evidence="1">Part of the 50S ribosomal subunit.</text>
</comment>
<comment type="similarity">
    <text evidence="1">Belongs to the universal ribosomal protein uL22 family.</text>
</comment>
<accession>B8DW18</accession>
<reference key="1">
    <citation type="journal article" date="2009" name="J. Bacteriol.">
        <title>Genome sequence of the probiotic bacterium Bifidobacterium animalis subsp. lactis AD011.</title>
        <authorList>
            <person name="Kim J.F."/>
            <person name="Jeong H."/>
            <person name="Yu D.S."/>
            <person name="Choi S.-H."/>
            <person name="Hur C.-G."/>
            <person name="Park M.-S."/>
            <person name="Yoon S.H."/>
            <person name="Kim D.-W."/>
            <person name="Ji G.E."/>
            <person name="Park H.-S."/>
            <person name="Oh T.K."/>
        </authorList>
    </citation>
    <scope>NUCLEOTIDE SEQUENCE [LARGE SCALE GENOMIC DNA]</scope>
    <source>
        <strain>AD011</strain>
    </source>
</reference>
<organism>
    <name type="scientific">Bifidobacterium animalis subsp. lactis (strain AD011)</name>
    <dbReference type="NCBI Taxonomy" id="442563"/>
    <lineage>
        <taxon>Bacteria</taxon>
        <taxon>Bacillati</taxon>
        <taxon>Actinomycetota</taxon>
        <taxon>Actinomycetes</taxon>
        <taxon>Bifidobacteriales</taxon>
        <taxon>Bifidobacteriaceae</taxon>
        <taxon>Bifidobacterium</taxon>
    </lineage>
</organism>
<name>RL22_BIFA0</name>
<keyword id="KW-1185">Reference proteome</keyword>
<keyword id="KW-0687">Ribonucleoprotein</keyword>
<keyword id="KW-0689">Ribosomal protein</keyword>
<keyword id="KW-0694">RNA-binding</keyword>
<keyword id="KW-0699">rRNA-binding</keyword>
<evidence type="ECO:0000255" key="1">
    <source>
        <dbReference type="HAMAP-Rule" id="MF_01331"/>
    </source>
</evidence>
<evidence type="ECO:0000305" key="2"/>
<gene>
    <name evidence="1" type="primary">rplV</name>
    <name type="ordered locus">BLA_0367</name>
</gene>
<protein>
    <recommendedName>
        <fullName evidence="1">Large ribosomal subunit protein uL22</fullName>
    </recommendedName>
    <alternativeName>
        <fullName evidence="2">50S ribosomal protein L22</fullName>
    </alternativeName>
</protein>
<dbReference type="EMBL" id="CP001213">
    <property type="protein sequence ID" value="ACL28669.1"/>
    <property type="molecule type" value="Genomic_DNA"/>
</dbReference>
<dbReference type="RefSeq" id="WP_004269021.1">
    <property type="nucleotide sequence ID" value="NC_011835.1"/>
</dbReference>
<dbReference type="SMR" id="B8DW18"/>
<dbReference type="STRING" id="442563.BLA_0367"/>
<dbReference type="GeneID" id="29695341"/>
<dbReference type="KEGG" id="bla:BLA_0367"/>
<dbReference type="HOGENOM" id="CLU_083987_3_3_11"/>
<dbReference type="Proteomes" id="UP000002456">
    <property type="component" value="Chromosome"/>
</dbReference>
<dbReference type="GO" id="GO:0022625">
    <property type="term" value="C:cytosolic large ribosomal subunit"/>
    <property type="evidence" value="ECO:0007669"/>
    <property type="project" value="TreeGrafter"/>
</dbReference>
<dbReference type="GO" id="GO:0019843">
    <property type="term" value="F:rRNA binding"/>
    <property type="evidence" value="ECO:0007669"/>
    <property type="project" value="UniProtKB-UniRule"/>
</dbReference>
<dbReference type="GO" id="GO:0003735">
    <property type="term" value="F:structural constituent of ribosome"/>
    <property type="evidence" value="ECO:0007669"/>
    <property type="project" value="InterPro"/>
</dbReference>
<dbReference type="GO" id="GO:0006412">
    <property type="term" value="P:translation"/>
    <property type="evidence" value="ECO:0007669"/>
    <property type="project" value="UniProtKB-UniRule"/>
</dbReference>
<dbReference type="CDD" id="cd00336">
    <property type="entry name" value="Ribosomal_L22"/>
    <property type="match status" value="1"/>
</dbReference>
<dbReference type="Gene3D" id="3.90.470.10">
    <property type="entry name" value="Ribosomal protein L22/L17"/>
    <property type="match status" value="1"/>
</dbReference>
<dbReference type="HAMAP" id="MF_01331_B">
    <property type="entry name" value="Ribosomal_uL22_B"/>
    <property type="match status" value="1"/>
</dbReference>
<dbReference type="InterPro" id="IPR001063">
    <property type="entry name" value="Ribosomal_uL22"/>
</dbReference>
<dbReference type="InterPro" id="IPR005727">
    <property type="entry name" value="Ribosomal_uL22_bac/chlpt-type"/>
</dbReference>
<dbReference type="InterPro" id="IPR047867">
    <property type="entry name" value="Ribosomal_uL22_bac/org-type"/>
</dbReference>
<dbReference type="InterPro" id="IPR018260">
    <property type="entry name" value="Ribosomal_uL22_CS"/>
</dbReference>
<dbReference type="InterPro" id="IPR036394">
    <property type="entry name" value="Ribosomal_uL22_sf"/>
</dbReference>
<dbReference type="NCBIfam" id="TIGR01044">
    <property type="entry name" value="rplV_bact"/>
    <property type="match status" value="1"/>
</dbReference>
<dbReference type="PANTHER" id="PTHR13501">
    <property type="entry name" value="CHLOROPLAST 50S RIBOSOMAL PROTEIN L22-RELATED"/>
    <property type="match status" value="1"/>
</dbReference>
<dbReference type="PANTHER" id="PTHR13501:SF8">
    <property type="entry name" value="LARGE RIBOSOMAL SUBUNIT PROTEIN UL22M"/>
    <property type="match status" value="1"/>
</dbReference>
<dbReference type="Pfam" id="PF00237">
    <property type="entry name" value="Ribosomal_L22"/>
    <property type="match status" value="1"/>
</dbReference>
<dbReference type="SUPFAM" id="SSF54843">
    <property type="entry name" value="Ribosomal protein L22"/>
    <property type="match status" value="1"/>
</dbReference>
<dbReference type="PROSITE" id="PS00464">
    <property type="entry name" value="RIBOSOMAL_L22"/>
    <property type="match status" value="1"/>
</dbReference>